<dbReference type="EC" id="3.1.3.-"/>
<dbReference type="EMBL" id="AB004318">
    <property type="protein sequence ID" value="BAB47575.1"/>
    <property type="molecule type" value="mRNA"/>
</dbReference>
<dbReference type="EMBL" id="AC006200">
    <property type="protein sequence ID" value="AAD14518.2"/>
    <property type="molecule type" value="Genomic_DNA"/>
</dbReference>
<dbReference type="EMBL" id="CP002685">
    <property type="protein sequence ID" value="AEC05411.1"/>
    <property type="molecule type" value="Genomic_DNA"/>
</dbReference>
<dbReference type="EMBL" id="CP002685">
    <property type="protein sequence ID" value="AEC05412.1"/>
    <property type="molecule type" value="Genomic_DNA"/>
</dbReference>
<dbReference type="EMBL" id="CP002685">
    <property type="protein sequence ID" value="ANM61748.1"/>
    <property type="molecule type" value="Genomic_DNA"/>
</dbReference>
<dbReference type="EMBL" id="CP002685">
    <property type="protein sequence ID" value="ANM61749.1"/>
    <property type="molecule type" value="Genomic_DNA"/>
</dbReference>
<dbReference type="EMBL" id="CP002685">
    <property type="protein sequence ID" value="ANM61752.1"/>
    <property type="molecule type" value="Genomic_DNA"/>
</dbReference>
<dbReference type="EMBL" id="AF412050">
    <property type="protein sequence ID" value="AAL06503.1"/>
    <property type="molecule type" value="mRNA"/>
</dbReference>
<dbReference type="EMBL" id="AY143886">
    <property type="protein sequence ID" value="AAN28825.1"/>
    <property type="molecule type" value="mRNA"/>
</dbReference>
<dbReference type="EMBL" id="AY085869">
    <property type="protein sequence ID" value="AAM63082.1"/>
    <property type="molecule type" value="mRNA"/>
</dbReference>
<dbReference type="EMBL" id="BX819931">
    <property type="status" value="NOT_ANNOTATED_CDS"/>
    <property type="molecule type" value="mRNA"/>
</dbReference>
<dbReference type="EMBL" id="AB053949">
    <property type="protein sequence ID" value="BAC41334.1"/>
    <property type="molecule type" value="mRNA"/>
</dbReference>
<dbReference type="PIR" id="E84421">
    <property type="entry name" value="E84421"/>
</dbReference>
<dbReference type="RefSeq" id="NP_001318171.1">
    <molecule id="Q9ZU49-1"/>
    <property type="nucleotide sequence ID" value="NM_001335038.1"/>
</dbReference>
<dbReference type="RefSeq" id="NP_001323949.1">
    <molecule id="Q9ZU49-2"/>
    <property type="nucleotide sequence ID" value="NM_001335041.1"/>
</dbReference>
<dbReference type="RefSeq" id="NP_001323950.1">
    <molecule id="Q9ZU49-1"/>
    <property type="nucleotide sequence ID" value="NM_001335040.1"/>
</dbReference>
<dbReference type="RefSeq" id="NP_565255.1">
    <molecule id="Q9ZU49-1"/>
    <property type="nucleotide sequence ID" value="NM_126179.5"/>
</dbReference>
<dbReference type="RefSeq" id="NP_973389.1">
    <molecule id="Q9ZU49-2"/>
    <property type="nucleotide sequence ID" value="NM_201660.2"/>
</dbReference>
<dbReference type="BioGRID" id="50">
    <property type="interactions" value="4"/>
</dbReference>
<dbReference type="FunCoup" id="Q9ZU49">
    <property type="interactions" value="2094"/>
</dbReference>
<dbReference type="IntAct" id="Q9ZU49">
    <property type="interactions" value="1"/>
</dbReference>
<dbReference type="STRING" id="3702.Q9ZU49"/>
<dbReference type="iPTMnet" id="Q9ZU49"/>
<dbReference type="PaxDb" id="3702-AT2G01180.1"/>
<dbReference type="ProteomicsDB" id="238589">
    <molecule id="Q9ZU49-1"/>
</dbReference>
<dbReference type="EnsemblPlants" id="AT2G01180.1">
    <molecule id="Q9ZU49-1"/>
    <property type="protein sequence ID" value="AT2G01180.1"/>
    <property type="gene ID" value="AT2G01180"/>
</dbReference>
<dbReference type="EnsemblPlants" id="AT2G01180.2">
    <molecule id="Q9ZU49-2"/>
    <property type="protein sequence ID" value="AT2G01180.2"/>
    <property type="gene ID" value="AT2G01180"/>
</dbReference>
<dbReference type="EnsemblPlants" id="AT2G01180.4">
    <molecule id="Q9ZU49-1"/>
    <property type="protein sequence ID" value="AT2G01180.4"/>
    <property type="gene ID" value="AT2G01180"/>
</dbReference>
<dbReference type="EnsemblPlants" id="AT2G01180.5">
    <molecule id="Q9ZU49-2"/>
    <property type="protein sequence ID" value="AT2G01180.5"/>
    <property type="gene ID" value="AT2G01180"/>
</dbReference>
<dbReference type="EnsemblPlants" id="AT2G01180.8">
    <molecule id="Q9ZU49-1"/>
    <property type="protein sequence ID" value="AT2G01180.8"/>
    <property type="gene ID" value="AT2G01180"/>
</dbReference>
<dbReference type="GeneID" id="814646"/>
<dbReference type="Gramene" id="AT2G01180.1">
    <molecule id="Q9ZU49-1"/>
    <property type="protein sequence ID" value="AT2G01180.1"/>
    <property type="gene ID" value="AT2G01180"/>
</dbReference>
<dbReference type="Gramene" id="AT2G01180.2">
    <molecule id="Q9ZU49-2"/>
    <property type="protein sequence ID" value="AT2G01180.2"/>
    <property type="gene ID" value="AT2G01180"/>
</dbReference>
<dbReference type="Gramene" id="AT2G01180.4">
    <molecule id="Q9ZU49-1"/>
    <property type="protein sequence ID" value="AT2G01180.4"/>
    <property type="gene ID" value="AT2G01180"/>
</dbReference>
<dbReference type="Gramene" id="AT2G01180.5">
    <molecule id="Q9ZU49-2"/>
    <property type="protein sequence ID" value="AT2G01180.5"/>
    <property type="gene ID" value="AT2G01180"/>
</dbReference>
<dbReference type="Gramene" id="AT2G01180.8">
    <molecule id="Q9ZU49-1"/>
    <property type="protein sequence ID" value="AT2G01180.8"/>
    <property type="gene ID" value="AT2G01180"/>
</dbReference>
<dbReference type="KEGG" id="ath:AT2G01180"/>
<dbReference type="Araport" id="AT2G01180"/>
<dbReference type="TAIR" id="AT2G01180">
    <property type="gene designation" value="PAP1"/>
</dbReference>
<dbReference type="eggNOG" id="KOG3030">
    <property type="taxonomic scope" value="Eukaryota"/>
</dbReference>
<dbReference type="InParanoid" id="Q9ZU49"/>
<dbReference type="OrthoDB" id="10030083at2759"/>
<dbReference type="PhylomeDB" id="Q9ZU49"/>
<dbReference type="BioCyc" id="ARA:MONOMER-AT2G01180"/>
<dbReference type="BioCyc" id="MetaCyc:MONOMER-AT2G01180"/>
<dbReference type="PRO" id="PR:Q9ZU49"/>
<dbReference type="Proteomes" id="UP000006548">
    <property type="component" value="Chromosome 2"/>
</dbReference>
<dbReference type="ExpressionAtlas" id="Q9ZU49">
    <property type="expression patterns" value="baseline and differential"/>
</dbReference>
<dbReference type="GO" id="GO:0016020">
    <property type="term" value="C:membrane"/>
    <property type="evidence" value="ECO:0007669"/>
    <property type="project" value="UniProtKB-SubCell"/>
</dbReference>
<dbReference type="GO" id="GO:0008195">
    <property type="term" value="F:phosphatidate phosphatase activity"/>
    <property type="evidence" value="ECO:0000314"/>
    <property type="project" value="TAIR"/>
</dbReference>
<dbReference type="GO" id="GO:0071456">
    <property type="term" value="P:cellular response to hypoxia"/>
    <property type="evidence" value="ECO:0007007"/>
    <property type="project" value="TAIR"/>
</dbReference>
<dbReference type="GO" id="GO:0006644">
    <property type="term" value="P:phospholipid metabolic process"/>
    <property type="evidence" value="ECO:0007669"/>
    <property type="project" value="InterPro"/>
</dbReference>
<dbReference type="GO" id="GO:0009626">
    <property type="term" value="P:plant-type hypersensitive response"/>
    <property type="evidence" value="ECO:0007669"/>
    <property type="project" value="UniProtKB-KW"/>
</dbReference>
<dbReference type="GO" id="GO:0010224">
    <property type="term" value="P:response to UV-B"/>
    <property type="evidence" value="ECO:0000270"/>
    <property type="project" value="TAIR"/>
</dbReference>
<dbReference type="CDD" id="cd03390">
    <property type="entry name" value="PAP2_containing_1_like"/>
    <property type="match status" value="1"/>
</dbReference>
<dbReference type="FunFam" id="1.20.144.10:FF:000001">
    <property type="entry name" value="Lipid phosphate phosphatase 2"/>
    <property type="match status" value="1"/>
</dbReference>
<dbReference type="Gene3D" id="1.20.144.10">
    <property type="entry name" value="Phosphatidic acid phosphatase type 2/haloperoxidase"/>
    <property type="match status" value="1"/>
</dbReference>
<dbReference type="InterPro" id="IPR036938">
    <property type="entry name" value="P_Acid_Pase_2/haloperoxi_sf"/>
</dbReference>
<dbReference type="InterPro" id="IPR000326">
    <property type="entry name" value="P_Acid_Pase_2/haloperoxidase"/>
</dbReference>
<dbReference type="InterPro" id="IPR043216">
    <property type="entry name" value="PA_PP_rel"/>
</dbReference>
<dbReference type="PANTHER" id="PTHR10165">
    <property type="entry name" value="LIPID PHOSPHATE PHOSPHATASE"/>
    <property type="match status" value="1"/>
</dbReference>
<dbReference type="PANTHER" id="PTHR10165:SF180">
    <property type="entry name" value="LIPID PHOSPHATE PHOSPHATASE 1"/>
    <property type="match status" value="1"/>
</dbReference>
<dbReference type="Pfam" id="PF01569">
    <property type="entry name" value="PAP2"/>
    <property type="match status" value="1"/>
</dbReference>
<dbReference type="SMART" id="SM00014">
    <property type="entry name" value="acidPPc"/>
    <property type="match status" value="1"/>
</dbReference>
<dbReference type="SUPFAM" id="SSF48317">
    <property type="entry name" value="Acid phosphatase/Vanadium-dependent haloperoxidase"/>
    <property type="match status" value="1"/>
</dbReference>
<name>LPP1_ARATH</name>
<reference key="1">
    <citation type="journal article" date="2001" name="J. Biol. Chem.">
        <title>Lipid phosphate phosphatases in Arabidopsis. Regulation of the AtLPP1 gene in response to stress.</title>
        <authorList>
            <person name="Pierrugues O."/>
            <person name="Brutesco C."/>
            <person name="Oshiro J."/>
            <person name="Gouy M."/>
            <person name="Deveaux Y."/>
            <person name="Carman G.M."/>
            <person name="Thuriaux P."/>
            <person name="Kazmaier M."/>
        </authorList>
    </citation>
    <scope>NUCLEOTIDE SEQUENCE [MRNA]</scope>
    <scope>FUNCTION</scope>
    <scope>ACTIVITY REGULATION</scope>
    <scope>INDUCTION</scope>
    <scope>TISSUE SPECIFICITY</scope>
</reference>
<reference key="2">
    <citation type="submission" date="1997-05" db="EMBL/GenBank/DDBJ databases">
        <title>One of the biological functions of the gene encoding phosphatidic acid phosphatase (PAP) correlates cell elongation in Arabidopsis thaliana.</title>
        <authorList>
            <person name="Katagiri T."/>
            <person name="Shinozaki K."/>
        </authorList>
    </citation>
    <scope>NUCLEOTIDE SEQUENCE [MRNA] (ISOFORM 1)</scope>
    <source>
        <strain>cv. Columbia</strain>
    </source>
</reference>
<reference key="3">
    <citation type="journal article" date="1999" name="Nature">
        <title>Sequence and analysis of chromosome 2 of the plant Arabidopsis thaliana.</title>
        <authorList>
            <person name="Lin X."/>
            <person name="Kaul S."/>
            <person name="Rounsley S.D."/>
            <person name="Shea T.P."/>
            <person name="Benito M.-I."/>
            <person name="Town C.D."/>
            <person name="Fujii C.Y."/>
            <person name="Mason T.M."/>
            <person name="Bowman C.L."/>
            <person name="Barnstead M.E."/>
            <person name="Feldblyum T.V."/>
            <person name="Buell C.R."/>
            <person name="Ketchum K.A."/>
            <person name="Lee J.J."/>
            <person name="Ronning C.M."/>
            <person name="Koo H.L."/>
            <person name="Moffat K.S."/>
            <person name="Cronin L.A."/>
            <person name="Shen M."/>
            <person name="Pai G."/>
            <person name="Van Aken S."/>
            <person name="Umayam L."/>
            <person name="Tallon L.J."/>
            <person name="Gill J.E."/>
            <person name="Adams M.D."/>
            <person name="Carrera A.J."/>
            <person name="Creasy T.H."/>
            <person name="Goodman H.M."/>
            <person name="Somerville C.R."/>
            <person name="Copenhaver G.P."/>
            <person name="Preuss D."/>
            <person name="Nierman W.C."/>
            <person name="White O."/>
            <person name="Eisen J.A."/>
            <person name="Salzberg S.L."/>
            <person name="Fraser C.M."/>
            <person name="Venter J.C."/>
        </authorList>
    </citation>
    <scope>NUCLEOTIDE SEQUENCE [LARGE SCALE GENOMIC DNA]</scope>
    <source>
        <strain>cv. Columbia</strain>
    </source>
</reference>
<reference key="4">
    <citation type="journal article" date="2017" name="Plant J.">
        <title>Araport11: a complete reannotation of the Arabidopsis thaliana reference genome.</title>
        <authorList>
            <person name="Cheng C.Y."/>
            <person name="Krishnakumar V."/>
            <person name="Chan A.P."/>
            <person name="Thibaud-Nissen F."/>
            <person name="Schobel S."/>
            <person name="Town C.D."/>
        </authorList>
    </citation>
    <scope>GENOME REANNOTATION</scope>
    <source>
        <strain>cv. Columbia</strain>
    </source>
</reference>
<reference key="5">
    <citation type="journal article" date="2003" name="Science">
        <title>Empirical analysis of transcriptional activity in the Arabidopsis genome.</title>
        <authorList>
            <person name="Yamada K."/>
            <person name="Lim J."/>
            <person name="Dale J.M."/>
            <person name="Chen H."/>
            <person name="Shinn P."/>
            <person name="Palm C.J."/>
            <person name="Southwick A.M."/>
            <person name="Wu H.C."/>
            <person name="Kim C.J."/>
            <person name="Nguyen M."/>
            <person name="Pham P.K."/>
            <person name="Cheuk R.F."/>
            <person name="Karlin-Newmann G."/>
            <person name="Liu S.X."/>
            <person name="Lam B."/>
            <person name="Sakano H."/>
            <person name="Wu T."/>
            <person name="Yu G."/>
            <person name="Miranda M."/>
            <person name="Quach H.L."/>
            <person name="Tripp M."/>
            <person name="Chang C.H."/>
            <person name="Lee J.M."/>
            <person name="Toriumi M.J."/>
            <person name="Chan M.M."/>
            <person name="Tang C.C."/>
            <person name="Onodera C.S."/>
            <person name="Deng J.M."/>
            <person name="Akiyama K."/>
            <person name="Ansari Y."/>
            <person name="Arakawa T."/>
            <person name="Banh J."/>
            <person name="Banno F."/>
            <person name="Bowser L."/>
            <person name="Brooks S.Y."/>
            <person name="Carninci P."/>
            <person name="Chao Q."/>
            <person name="Choy N."/>
            <person name="Enju A."/>
            <person name="Goldsmith A.D."/>
            <person name="Gurjal M."/>
            <person name="Hansen N.F."/>
            <person name="Hayashizaki Y."/>
            <person name="Johnson-Hopson C."/>
            <person name="Hsuan V.W."/>
            <person name="Iida K."/>
            <person name="Karnes M."/>
            <person name="Khan S."/>
            <person name="Koesema E."/>
            <person name="Ishida J."/>
            <person name="Jiang P.X."/>
            <person name="Jones T."/>
            <person name="Kawai J."/>
            <person name="Kamiya A."/>
            <person name="Meyers C."/>
            <person name="Nakajima M."/>
            <person name="Narusaka M."/>
            <person name="Seki M."/>
            <person name="Sakurai T."/>
            <person name="Satou M."/>
            <person name="Tamse R."/>
            <person name="Vaysberg M."/>
            <person name="Wallender E.K."/>
            <person name="Wong C."/>
            <person name="Yamamura Y."/>
            <person name="Yuan S."/>
            <person name="Shinozaki K."/>
            <person name="Davis R.W."/>
            <person name="Theologis A."/>
            <person name="Ecker J.R."/>
        </authorList>
    </citation>
    <scope>NUCLEOTIDE SEQUENCE [LARGE SCALE MRNA] (ISOFORM 1)</scope>
    <source>
        <strain>cv. Columbia</strain>
    </source>
</reference>
<reference key="6">
    <citation type="submission" date="2002-03" db="EMBL/GenBank/DDBJ databases">
        <title>Full-length cDNA from Arabidopsis thaliana.</title>
        <authorList>
            <person name="Brover V.V."/>
            <person name="Troukhan M.E."/>
            <person name="Alexandrov N.A."/>
            <person name="Lu Y.-P."/>
            <person name="Flavell R.B."/>
            <person name="Feldmann K.A."/>
        </authorList>
    </citation>
    <scope>NUCLEOTIDE SEQUENCE [LARGE SCALE MRNA] (ISOFORM 1)</scope>
</reference>
<reference key="7">
    <citation type="journal article" date="2004" name="Genome Res.">
        <title>Whole genome sequence comparisons and 'full-length' cDNA sequences: a combined approach to evaluate and improve Arabidopsis genome annotation.</title>
        <authorList>
            <person name="Castelli V."/>
            <person name="Aury J.-M."/>
            <person name="Jaillon O."/>
            <person name="Wincker P."/>
            <person name="Clepet C."/>
            <person name="Menard M."/>
            <person name="Cruaud C."/>
            <person name="Quetier F."/>
            <person name="Scarpelli C."/>
            <person name="Schaechter V."/>
            <person name="Temple G."/>
            <person name="Caboche M."/>
            <person name="Weissenbach J."/>
            <person name="Salanoubat M."/>
        </authorList>
    </citation>
    <scope>NUCLEOTIDE SEQUENCE [LARGE SCALE MRNA] (ISOFORM 2)</scope>
    <source>
        <strain>cv. Columbia</strain>
    </source>
</reference>
<reference key="8">
    <citation type="submission" date="2001-01" db="EMBL/GenBank/DDBJ databases">
        <title>Prenyl alcohol production by overexpression of prenyl diphosphate phosphatase in Yeast Saccharomyces cerevisiae.</title>
        <authorList>
            <person name="Tokuhiro K."/>
            <person name="Muramoto N."/>
            <person name="Yamada Y."/>
            <person name="Asami O."/>
            <person name="Hirai M."/>
            <person name="Obata S."/>
            <person name="Ohto C."/>
            <person name="Muramatsu M."/>
        </authorList>
    </citation>
    <scope>NUCLEOTIDE SEQUENCE [MRNA] OF 26-327</scope>
    <source>
        <strain>cv. Columbia</strain>
    </source>
</reference>
<gene>
    <name type="primary">LPP1</name>
    <name type="synonym">PAP1</name>
    <name type="ordered locus">At2g01180</name>
    <name type="ORF">F10A8.6</name>
</gene>
<accession>Q9ZU49</accession>
<accession>Q3EC91</accession>
<accession>Q8H0G3</accession>
<accession>Q8LDP8</accession>
<accession>Q945N3</accession>
<accession>Q94LY6</accession>
<sequence length="327" mass="36683">MTIGSFFSSLLFWRNSQDQEAQRGRMQEIDLSVHTIKSHGGRVASKHKHDWIILVILIAIEIGLNLISPFYRYVGKDMMTDLKYPFKDNTVPIWSVPVYAVLLPIIVFVCFYLKRTCVYDLHHSILGLLFAVLITGVITDSIKVATGRPRPNFYWRCFPDGKELYDALGGVVCHGKAAEVKEGHKSFPSGHTSWSFAGLTFLSLYLSGKIKAFNNEGHVAKLCLVIFPLLAACLVGISRVDDYWHHWQDVFAGALIGTLVAAFCYRQFYPNPYHEEGWGPYAYFKAAQERGVPVTSSQNGDALRAMSLQMDSTSLENMESGTSTAPR</sequence>
<protein>
    <recommendedName>
        <fullName>Lipid phosphate phosphatase 1</fullName>
        <shortName>AtLPP1</shortName>
        <ecNumber>3.1.3.-</ecNumber>
    </recommendedName>
    <alternativeName>
        <fullName>Phosphatidic acid phosphatase 1</fullName>
        <shortName>AtPAP1</shortName>
    </alternativeName>
    <alternativeName>
        <fullName>Prenyl diphosphate phosphatase</fullName>
    </alternativeName>
</protein>
<comment type="function">
    <text evidence="2">Plays a general role in cellular responses to stress, may be by attenuating the signal produced by phospholipases. Exhibits both diacylglycerol pyrophosphate (DGPP) phosphatase and phosphatidate (PA) phosphatase activities. Substrate preference is diacylglycerol pyrophosphate &gt; phosphatidate.</text>
</comment>
<comment type="activity regulation">
    <text evidence="2">PA phosphatase activity inhibited by N-ethylmaleimide with an IC(50) value of 10 mM.</text>
</comment>
<comment type="subcellular location">
    <subcellularLocation>
        <location evidence="4">Membrane</location>
        <topology evidence="4">Multi-pass membrane protein</topology>
    </subcellularLocation>
</comment>
<comment type="alternative products">
    <event type="alternative splicing"/>
    <isoform>
        <id>Q9ZU49-1</id>
        <name>1</name>
        <sequence type="displayed"/>
    </isoform>
    <isoform>
        <id>Q9ZU49-2</id>
        <name>2</name>
        <sequence type="described" ref="VSP_053601"/>
    </isoform>
</comment>
<comment type="tissue specificity">
    <text evidence="2">Strongly expressed in leaves, moderately in roots, weakly in floral hamps and flower buds, and not detected in adult flowers and seedpods.</text>
</comment>
<comment type="induction">
    <text evidence="2">Rapid increase in response to severe radiation stress (gamma rays or UV-B). Returns to basal level 45 minutes after the radiation injury. Also induced by mastoparan and by the hypersensitive response elicitor harpin. In this later case, induction is also observed in the leaves adjacent to those that were infiltrated with harpin.</text>
</comment>
<comment type="similarity">
    <text evidence="4">Belongs to the PA-phosphatase related phosphoesterase family.</text>
</comment>
<comment type="sequence caution" evidence="4">
    <conflict type="miscellaneous discrepancy">
        <sequence resource="EMBL" id="BX819931"/>
    </conflict>
    <text>Sequencing errors.</text>
</comment>
<evidence type="ECO:0000255" key="1"/>
<evidence type="ECO:0000269" key="2">
    <source>
    </source>
</evidence>
<evidence type="ECO:0000303" key="3">
    <source>
    </source>
</evidence>
<evidence type="ECO:0000305" key="4"/>
<proteinExistence type="evidence at transcript level"/>
<keyword id="KW-0025">Alternative splicing</keyword>
<keyword id="KW-0378">Hydrolase</keyword>
<keyword id="KW-0381">Hypersensitive response</keyword>
<keyword id="KW-0472">Membrane</keyword>
<keyword id="KW-0611">Plant defense</keyword>
<keyword id="KW-1185">Reference proteome</keyword>
<keyword id="KW-0812">Transmembrane</keyword>
<keyword id="KW-1133">Transmembrane helix</keyword>
<feature type="chain" id="PRO_0000220915" description="Lipid phosphate phosphatase 1">
    <location>
        <begin position="1"/>
        <end position="327"/>
    </location>
</feature>
<feature type="transmembrane region" description="Helical" evidence="1">
    <location>
        <begin position="51"/>
        <end position="71"/>
    </location>
</feature>
<feature type="transmembrane region" description="Helical" evidence="1">
    <location>
        <begin position="93"/>
        <end position="113"/>
    </location>
</feature>
<feature type="transmembrane region" description="Helical" evidence="1">
    <location>
        <begin position="118"/>
        <end position="138"/>
    </location>
</feature>
<feature type="transmembrane region" description="Helical" evidence="1">
    <location>
        <begin position="187"/>
        <end position="207"/>
    </location>
</feature>
<feature type="transmembrane region" description="Helical" evidence="1">
    <location>
        <begin position="217"/>
        <end position="237"/>
    </location>
</feature>
<feature type="transmembrane region" description="Helical" evidence="1">
    <location>
        <begin position="244"/>
        <end position="264"/>
    </location>
</feature>
<feature type="splice variant" id="VSP_053601" description="In isoform 2." evidence="3">
    <location>
        <begin position="1"/>
        <end position="25"/>
    </location>
</feature>
<feature type="sequence conflict" description="In Ref. 6; AAM63082." evidence="4" ref="6">
    <original>L</original>
    <variation>V</variation>
    <location>
        <position position="103"/>
    </location>
</feature>
<feature type="sequence conflict" description="In Ref. 5; AAL06503/AAN28825." evidence="4" ref="5">
    <original>V</original>
    <variation>A</variation>
    <location>
        <position position="144"/>
    </location>
</feature>
<feature type="sequence conflict" description="In Ref. 6; AAM63082." evidence="4" ref="6">
    <original>H</original>
    <variation>Q</variation>
    <location>
        <position position="274"/>
    </location>
</feature>
<feature type="sequence conflict" description="In Ref. 6; AAM63082." evidence="4" ref="6">
    <original>A</original>
    <variation>G</variation>
    <location>
        <position position="325"/>
    </location>
</feature>
<organism>
    <name type="scientific">Arabidopsis thaliana</name>
    <name type="common">Mouse-ear cress</name>
    <dbReference type="NCBI Taxonomy" id="3702"/>
    <lineage>
        <taxon>Eukaryota</taxon>
        <taxon>Viridiplantae</taxon>
        <taxon>Streptophyta</taxon>
        <taxon>Embryophyta</taxon>
        <taxon>Tracheophyta</taxon>
        <taxon>Spermatophyta</taxon>
        <taxon>Magnoliopsida</taxon>
        <taxon>eudicotyledons</taxon>
        <taxon>Gunneridae</taxon>
        <taxon>Pentapetalae</taxon>
        <taxon>rosids</taxon>
        <taxon>malvids</taxon>
        <taxon>Brassicales</taxon>
        <taxon>Brassicaceae</taxon>
        <taxon>Camelineae</taxon>
        <taxon>Arabidopsis</taxon>
    </lineage>
</organism>